<sequence>MSNNAVYAVPQVKTTKTSSKTTFHFTAGLFSGLTSSILLQPADLLKTRVQQSQNASLLPTVKAILSSPNPIRNLWRGTLPSALRTGFGSALYFTSLNALRTGLVQTNGIAPVTNSSSALPKLSNTANLATGAAARVAAGFVMMPVTVIKVRYESDYYAYRSLFGAGRDIVRTEGFRGLFSGFGATAARDAPYAGLYVLFYEQLKRRLAGLSSSSSDQQPLKSSSINFVSGGLAAGLATTITNPFDAVKTRLQLMPGRYGNMMRAVRLMVQEDGVRSLFGGLGLRITRKALSSALAWTVYEELILRAEVQWGSKGE</sequence>
<evidence type="ECO:0000250" key="1">
    <source>
        <dbReference type="UniProtKB" id="Q96DW6"/>
    </source>
</evidence>
<evidence type="ECO:0000255" key="2">
    <source>
        <dbReference type="HAMAP-Rule" id="MF_03064"/>
    </source>
</evidence>
<name>S2538_ASPNC</name>
<accession>A2Q9F0</accession>
<comment type="function">
    <text evidence="2">Mitochondrial glycine transporter that imports glycine into the mitochondrial matrix. Plays an important role in providing glycine for the first enzymatic step in heme biosynthesis, the condensation of glycine with succinyl-CoA to produce 5-aminolevulinate (ALA) in the mitochondrial matrix.</text>
</comment>
<comment type="catalytic activity">
    <reaction evidence="1">
        <text>glycine(in) = glycine(out)</text>
        <dbReference type="Rhea" id="RHEA:70715"/>
        <dbReference type="ChEBI" id="CHEBI:57305"/>
    </reaction>
</comment>
<comment type="subcellular location">
    <subcellularLocation>
        <location evidence="2">Mitochondrion inner membrane</location>
        <topology evidence="2">Multi-pass membrane protein</topology>
    </subcellularLocation>
</comment>
<comment type="similarity">
    <text evidence="2">Belongs to the mitochondrial carrier (TC 2.A.29) family. SLC25A38 subfamily.</text>
</comment>
<keyword id="KW-0472">Membrane</keyword>
<keyword id="KW-0496">Mitochondrion</keyword>
<keyword id="KW-0999">Mitochondrion inner membrane</keyword>
<keyword id="KW-1185">Reference proteome</keyword>
<keyword id="KW-0677">Repeat</keyword>
<keyword id="KW-0812">Transmembrane</keyword>
<keyword id="KW-1133">Transmembrane helix</keyword>
<keyword id="KW-0813">Transport</keyword>
<feature type="chain" id="PRO_0000378927" description="Mitochondrial glycine transporter">
    <location>
        <begin position="1"/>
        <end position="315"/>
    </location>
</feature>
<feature type="transmembrane region" description="Helical; Name=1" evidence="2">
    <location>
        <begin position="25"/>
        <end position="50"/>
    </location>
</feature>
<feature type="transmembrane region" description="Helical; Name=2" evidence="2">
    <location>
        <begin position="77"/>
        <end position="103"/>
    </location>
</feature>
<feature type="transmembrane region" description="Helical; Name=3" evidence="2">
    <location>
        <begin position="128"/>
        <end position="153"/>
    </location>
</feature>
<feature type="transmembrane region" description="Helical; Name=4" evidence="2">
    <location>
        <begin position="181"/>
        <end position="204"/>
    </location>
</feature>
<feature type="transmembrane region" description="Helical; Name=5" evidence="2">
    <location>
        <begin position="225"/>
        <end position="251"/>
    </location>
</feature>
<feature type="transmembrane region" description="Helical; Name=6" evidence="2">
    <location>
        <begin position="280"/>
        <end position="298"/>
    </location>
</feature>
<feature type="repeat" description="Solcar 1" evidence="2">
    <location>
        <begin position="19"/>
        <end position="102"/>
    </location>
</feature>
<feature type="repeat" description="Solcar 2" evidence="2">
    <location>
        <begin position="125"/>
        <end position="206"/>
    </location>
</feature>
<feature type="repeat" description="Solcar 3" evidence="2">
    <location>
        <begin position="221"/>
        <end position="305"/>
    </location>
</feature>
<dbReference type="EMBL" id="AM269974">
    <property type="protein sequence ID" value="CAK43862.1"/>
    <property type="molecule type" value="Genomic_DNA"/>
</dbReference>
<dbReference type="RefSeq" id="XP_001389189.1">
    <property type="nucleotide sequence ID" value="XM_001389152.1"/>
</dbReference>
<dbReference type="SMR" id="A2Q9F0"/>
<dbReference type="EnsemblFungi" id="CAK43862">
    <property type="protein sequence ID" value="CAK43862"/>
    <property type="gene ID" value="An01g07650"/>
</dbReference>
<dbReference type="GeneID" id="4978276"/>
<dbReference type="KEGG" id="ang:An01g07650"/>
<dbReference type="VEuPathDB" id="FungiDB:An01g07650"/>
<dbReference type="HOGENOM" id="CLU_015166_0_3_1"/>
<dbReference type="Proteomes" id="UP000006706">
    <property type="component" value="Chromosome 2R"/>
</dbReference>
<dbReference type="GO" id="GO:0005743">
    <property type="term" value="C:mitochondrial inner membrane"/>
    <property type="evidence" value="ECO:0007669"/>
    <property type="project" value="UniProtKB-SubCell"/>
</dbReference>
<dbReference type="GO" id="GO:0015187">
    <property type="term" value="F:glycine transmembrane transporter activity"/>
    <property type="evidence" value="ECO:0007669"/>
    <property type="project" value="UniProtKB-UniRule"/>
</dbReference>
<dbReference type="GO" id="GO:1904983">
    <property type="term" value="P:glycine import into mitochondrion"/>
    <property type="evidence" value="ECO:0007669"/>
    <property type="project" value="UniProtKB-UniRule"/>
</dbReference>
<dbReference type="GO" id="GO:0006783">
    <property type="term" value="P:heme biosynthetic process"/>
    <property type="evidence" value="ECO:0007669"/>
    <property type="project" value="EnsemblFungi"/>
</dbReference>
<dbReference type="FunFam" id="1.50.40.10:FF:000103">
    <property type="entry name" value="Mitochondrial glycine transporter"/>
    <property type="match status" value="1"/>
</dbReference>
<dbReference type="Gene3D" id="1.50.40.10">
    <property type="entry name" value="Mitochondrial carrier domain"/>
    <property type="match status" value="2"/>
</dbReference>
<dbReference type="HAMAP" id="MF_03064">
    <property type="entry name" value="SLC25A38"/>
    <property type="match status" value="1"/>
</dbReference>
<dbReference type="InterPro" id="IPR030847">
    <property type="entry name" value="Hem25/SLC25A38"/>
</dbReference>
<dbReference type="InterPro" id="IPR018108">
    <property type="entry name" value="Mitochondrial_sb/sol_carrier"/>
</dbReference>
<dbReference type="InterPro" id="IPR023395">
    <property type="entry name" value="Mt_carrier_dom_sf"/>
</dbReference>
<dbReference type="PANTHER" id="PTHR46181">
    <property type="entry name" value="MITOCHONDRIAL GLYCINE TRANSPORTER"/>
    <property type="match status" value="1"/>
</dbReference>
<dbReference type="PANTHER" id="PTHR46181:SF3">
    <property type="entry name" value="MITOCHONDRIAL GLYCINE TRANSPORTER"/>
    <property type="match status" value="1"/>
</dbReference>
<dbReference type="Pfam" id="PF00153">
    <property type="entry name" value="Mito_carr"/>
    <property type="match status" value="3"/>
</dbReference>
<dbReference type="SUPFAM" id="SSF103506">
    <property type="entry name" value="Mitochondrial carrier"/>
    <property type="match status" value="1"/>
</dbReference>
<dbReference type="PROSITE" id="PS50920">
    <property type="entry name" value="SOLCAR"/>
    <property type="match status" value="3"/>
</dbReference>
<reference key="1">
    <citation type="journal article" date="2007" name="Nat. Biotechnol.">
        <title>Genome sequencing and analysis of the versatile cell factory Aspergillus niger CBS 513.88.</title>
        <authorList>
            <person name="Pel H.J."/>
            <person name="de Winde J.H."/>
            <person name="Archer D.B."/>
            <person name="Dyer P.S."/>
            <person name="Hofmann G."/>
            <person name="Schaap P.J."/>
            <person name="Turner G."/>
            <person name="de Vries R.P."/>
            <person name="Albang R."/>
            <person name="Albermann K."/>
            <person name="Andersen M.R."/>
            <person name="Bendtsen J.D."/>
            <person name="Benen J.A.E."/>
            <person name="van den Berg M."/>
            <person name="Breestraat S."/>
            <person name="Caddick M.X."/>
            <person name="Contreras R."/>
            <person name="Cornell M."/>
            <person name="Coutinho P.M."/>
            <person name="Danchin E.G.J."/>
            <person name="Debets A.J.M."/>
            <person name="Dekker P."/>
            <person name="van Dijck P.W.M."/>
            <person name="van Dijk A."/>
            <person name="Dijkhuizen L."/>
            <person name="Driessen A.J.M."/>
            <person name="d'Enfert C."/>
            <person name="Geysens S."/>
            <person name="Goosen C."/>
            <person name="Groot G.S.P."/>
            <person name="de Groot P.W.J."/>
            <person name="Guillemette T."/>
            <person name="Henrissat B."/>
            <person name="Herweijer M."/>
            <person name="van den Hombergh J.P.T.W."/>
            <person name="van den Hondel C.A.M.J.J."/>
            <person name="van der Heijden R.T.J.M."/>
            <person name="van der Kaaij R.M."/>
            <person name="Klis F.M."/>
            <person name="Kools H.J."/>
            <person name="Kubicek C.P."/>
            <person name="van Kuyk P.A."/>
            <person name="Lauber J."/>
            <person name="Lu X."/>
            <person name="van der Maarel M.J.E.C."/>
            <person name="Meulenberg R."/>
            <person name="Menke H."/>
            <person name="Mortimer M.A."/>
            <person name="Nielsen J."/>
            <person name="Oliver S.G."/>
            <person name="Olsthoorn M."/>
            <person name="Pal K."/>
            <person name="van Peij N.N.M.E."/>
            <person name="Ram A.F.J."/>
            <person name="Rinas U."/>
            <person name="Roubos J.A."/>
            <person name="Sagt C.M.J."/>
            <person name="Schmoll M."/>
            <person name="Sun J."/>
            <person name="Ussery D."/>
            <person name="Varga J."/>
            <person name="Vervecken W."/>
            <person name="van de Vondervoort P.J.J."/>
            <person name="Wedler H."/>
            <person name="Woesten H.A.B."/>
            <person name="Zeng A.-P."/>
            <person name="van Ooyen A.J.J."/>
            <person name="Visser J."/>
            <person name="Stam H."/>
        </authorList>
    </citation>
    <scope>NUCLEOTIDE SEQUENCE [LARGE SCALE GENOMIC DNA]</scope>
    <source>
        <strain>ATCC MYA-4892 / CBS 513.88 / FGSC A1513</strain>
    </source>
</reference>
<proteinExistence type="inferred from homology"/>
<organism>
    <name type="scientific">Aspergillus niger (strain ATCC MYA-4892 / CBS 513.88 / FGSC A1513)</name>
    <dbReference type="NCBI Taxonomy" id="425011"/>
    <lineage>
        <taxon>Eukaryota</taxon>
        <taxon>Fungi</taxon>
        <taxon>Dikarya</taxon>
        <taxon>Ascomycota</taxon>
        <taxon>Pezizomycotina</taxon>
        <taxon>Eurotiomycetes</taxon>
        <taxon>Eurotiomycetidae</taxon>
        <taxon>Eurotiales</taxon>
        <taxon>Aspergillaceae</taxon>
        <taxon>Aspergillus</taxon>
        <taxon>Aspergillus subgen. Circumdati</taxon>
    </lineage>
</organism>
<gene>
    <name type="ORF">An01g07650</name>
</gene>
<protein>
    <recommendedName>
        <fullName evidence="2">Mitochondrial glycine transporter</fullName>
    </recommendedName>
    <alternativeName>
        <fullName evidence="2">Solute carrier family 25 member 38 homolog</fullName>
    </alternativeName>
</protein>